<gene>
    <name type="primary">AZI2</name>
    <name type="ORF">QtsA-13627</name>
    <name type="ORF">QtsA-14164</name>
</gene>
<accession>Q4R3X1</accession>
<accession>Q4R7X6</accession>
<name>AZI2_MACFA</name>
<dbReference type="EMBL" id="AB168685">
    <property type="protein sequence ID" value="BAE00796.1"/>
    <property type="molecule type" value="mRNA"/>
</dbReference>
<dbReference type="EMBL" id="AB179144">
    <property type="protein sequence ID" value="BAE02195.1"/>
    <property type="molecule type" value="mRNA"/>
</dbReference>
<dbReference type="SMR" id="Q4R3X1"/>
<dbReference type="STRING" id="9541.ENSMFAP00000019799"/>
<dbReference type="eggNOG" id="ENOG502QV07">
    <property type="taxonomic scope" value="Eukaryota"/>
</dbReference>
<dbReference type="Proteomes" id="UP000233100">
    <property type="component" value="Unplaced"/>
</dbReference>
<dbReference type="GO" id="GO:0005737">
    <property type="term" value="C:cytoplasm"/>
    <property type="evidence" value="ECO:0007669"/>
    <property type="project" value="UniProtKB-SubCell"/>
</dbReference>
<dbReference type="InterPro" id="IPR024581">
    <property type="entry name" value="TBD"/>
</dbReference>
<dbReference type="InterPro" id="IPR051891">
    <property type="entry name" value="TBK1-IKBKE_adapters"/>
</dbReference>
<dbReference type="PANTHER" id="PTHR14432:SF6">
    <property type="entry name" value="5-AZACYTIDINE-INDUCED PROTEIN 2"/>
    <property type="match status" value="1"/>
</dbReference>
<dbReference type="PANTHER" id="PTHR14432">
    <property type="entry name" value="PROSAPIP2 PROTEIN/5-AZACYTIDINE INDUCED GENE 2"/>
    <property type="match status" value="1"/>
</dbReference>
<dbReference type="Pfam" id="PF12845">
    <property type="entry name" value="TBD"/>
    <property type="match status" value="1"/>
</dbReference>
<sequence>MDALVEDDICILNHEKAHKRDTVTPVSIYSGDESVASHFALVTAYEDIKKRLKDSEKENSLLKKRIRFLEEKLIARFDEETSSVGREQVNKAYHAYREVCIDRDNLKSKLDKMNKDNSESLKVLNEQLQSKEVELLQLRTEVETQQVMRNLNTPSSNWEVEKLSCDLKIHGLEQELELMRKECSDLKIELRKAKQTDPYQEDNLKSRDLQKLSISSDNMQHAYWELKREMSNLHLVTQVQAELLRKLKTSTAIKKACAPVGCSEDLGRDSTKLHLMNFTATYTRHPPLSPNGKALCHAASSPLPGDIKVLSEKAVLQSWTDNERSIPNDGTCFQEHSSYGRNSLSLEDNSWVFPSPPKSSETAFGETKSKTLPLPNLPPLHYLDQHNQNCLYKN</sequence>
<evidence type="ECO:0000250" key="1"/>
<evidence type="ECO:0000250" key="2">
    <source>
        <dbReference type="UniProtKB" id="Q4KMA0"/>
    </source>
</evidence>
<evidence type="ECO:0000250" key="3">
    <source>
        <dbReference type="UniProtKB" id="Q9H6S1"/>
    </source>
</evidence>
<evidence type="ECO:0000250" key="4">
    <source>
        <dbReference type="UniProtKB" id="Q9QYP6"/>
    </source>
</evidence>
<evidence type="ECO:0000255" key="5"/>
<evidence type="ECO:0000256" key="6">
    <source>
        <dbReference type="SAM" id="MobiDB-lite"/>
    </source>
</evidence>
<evidence type="ECO:0000303" key="7">
    <source ref="1"/>
</evidence>
<evidence type="ECO:0000305" key="8"/>
<reference key="1">
    <citation type="submission" date="2005-06" db="EMBL/GenBank/DDBJ databases">
        <title>DNA sequences of macaque genes expressed in brain or testis and its evolutionary implications.</title>
        <authorList>
            <consortium name="International consortium for macaque cDNA sequencing and analysis"/>
        </authorList>
    </citation>
    <scope>NUCLEOTIDE SEQUENCE [LARGE SCALE MRNA] (ISOFORMS 1 AND 2)</scope>
    <source>
        <tissue>Testis</tissue>
    </source>
</reference>
<comment type="function">
    <text evidence="3">Adapter protein which binds TBK1 and IKBKE playing a role in antiviral innate immunity (By similarity). Activates serine/threonine-protein kinase TBK1 and facilitates its oligomerization (By similarity). Enhances the phosphorylation of NF-kappa-B p65 subunit RELA by TBK1 (By similarity). Promotes TBK1-induced as well as TNF-alpha or PMA-induced activation of NF-kappa-B (By similarity). Participates in IFNB promoter activation via TICAM1 (By similarity).</text>
</comment>
<comment type="subunit">
    <text evidence="3 4">Homodimer (By similarity). Interacts with IKBKE, TBK1 and TICAM1 (By similarity). Interacts with TAX1BP1 (By similarity). Interacts with CALCOCO2 (By similarity).</text>
</comment>
<comment type="subcellular location">
    <subcellularLocation>
        <location evidence="3">Cytoplasm</location>
    </subcellularLocation>
</comment>
<comment type="alternative products">
    <event type="alternative splicing"/>
    <isoform>
        <id>Q4R3X1-1</id>
        <name>1</name>
        <sequence type="displayed"/>
    </isoform>
    <isoform>
        <id>Q4R3X1-2</id>
        <name>2</name>
        <sequence type="described" ref="VSP_023821"/>
    </isoform>
</comment>
<comment type="PTM">
    <text evidence="4">Ubiquitinated via 'Lys-48'-linked polyubiquitination by TRIM38, leading to its degradation.</text>
</comment>
<feature type="chain" id="PRO_0000280603" description="5-azacytidine-induced protein 2">
    <location>
        <begin position="1"/>
        <end position="394"/>
    </location>
</feature>
<feature type="region of interest" description="Homodimerization" evidence="1">
    <location>
        <begin position="1"/>
        <end position="197"/>
    </location>
</feature>
<feature type="region of interest" description="Interaction with TBK1 and IKBKE" evidence="1">
    <location>
        <begin position="216"/>
        <end position="257"/>
    </location>
</feature>
<feature type="region of interest" description="Disordered" evidence="6">
    <location>
        <begin position="355"/>
        <end position="379"/>
    </location>
</feature>
<feature type="coiled-coil region" evidence="5">
    <location>
        <begin position="40"/>
        <end position="76"/>
    </location>
</feature>
<feature type="coiled-coil region" evidence="5">
    <location>
        <begin position="102"/>
        <end position="196"/>
    </location>
</feature>
<feature type="modified residue" description="Phosphoserine" evidence="2">
    <location>
        <position position="318"/>
    </location>
</feature>
<feature type="modified residue" description="Phosphoserine" evidence="3">
    <location>
        <position position="355"/>
    </location>
</feature>
<feature type="splice variant" id="VSP_023821" description="In isoform 2." evidence="7">
    <original>MDALVEDDICILNHEKAHKRDTVTPVSIYSGDESVASHFALVTAYEDIKKR</original>
    <variation>MNLLLPILLLSLHMKTSKND</variation>
    <location>
        <begin position="1"/>
        <end position="51"/>
    </location>
</feature>
<feature type="sequence conflict" description="In Ref. 1; BAE00796." evidence="8" ref="1">
    <original>R</original>
    <variation>Q</variation>
    <location>
        <position position="191"/>
    </location>
</feature>
<protein>
    <recommendedName>
        <fullName>5-azacytidine-induced protein 2</fullName>
    </recommendedName>
</protein>
<keyword id="KW-0025">Alternative splicing</keyword>
<keyword id="KW-0175">Coiled coil</keyword>
<keyword id="KW-0963">Cytoplasm</keyword>
<keyword id="KW-0597">Phosphoprotein</keyword>
<keyword id="KW-1185">Reference proteome</keyword>
<keyword id="KW-0832">Ubl conjugation</keyword>
<proteinExistence type="evidence at transcript level"/>
<organism>
    <name type="scientific">Macaca fascicularis</name>
    <name type="common">Crab-eating macaque</name>
    <name type="synonym">Cynomolgus monkey</name>
    <dbReference type="NCBI Taxonomy" id="9541"/>
    <lineage>
        <taxon>Eukaryota</taxon>
        <taxon>Metazoa</taxon>
        <taxon>Chordata</taxon>
        <taxon>Craniata</taxon>
        <taxon>Vertebrata</taxon>
        <taxon>Euteleostomi</taxon>
        <taxon>Mammalia</taxon>
        <taxon>Eutheria</taxon>
        <taxon>Euarchontoglires</taxon>
        <taxon>Primates</taxon>
        <taxon>Haplorrhini</taxon>
        <taxon>Catarrhini</taxon>
        <taxon>Cercopithecidae</taxon>
        <taxon>Cercopithecinae</taxon>
        <taxon>Macaca</taxon>
    </lineage>
</organism>